<feature type="chain" id="PRO_1000059734" description="ATP-dependent 6-phosphofructokinase">
    <location>
        <begin position="1"/>
        <end position="324"/>
    </location>
</feature>
<feature type="active site" description="Proton acceptor" evidence="1">
    <location>
        <position position="132"/>
    </location>
</feature>
<feature type="binding site" evidence="1">
    <location>
        <position position="15"/>
    </location>
    <ligand>
        <name>ATP</name>
        <dbReference type="ChEBI" id="CHEBI:30616"/>
    </ligand>
</feature>
<feature type="binding site" evidence="1">
    <location>
        <begin position="25"/>
        <end position="29"/>
    </location>
    <ligand>
        <name>ADP</name>
        <dbReference type="ChEBI" id="CHEBI:456216"/>
        <note>allosteric activator; ligand shared between dimeric partners</note>
    </ligand>
</feature>
<feature type="binding site" evidence="1">
    <location>
        <begin position="76"/>
        <end position="77"/>
    </location>
    <ligand>
        <name>ATP</name>
        <dbReference type="ChEBI" id="CHEBI:30616"/>
    </ligand>
</feature>
<feature type="binding site" evidence="1">
    <location>
        <begin position="106"/>
        <end position="109"/>
    </location>
    <ligand>
        <name>ATP</name>
        <dbReference type="ChEBI" id="CHEBI:30616"/>
    </ligand>
</feature>
<feature type="binding site" evidence="1">
    <location>
        <position position="107"/>
    </location>
    <ligand>
        <name>Mg(2+)</name>
        <dbReference type="ChEBI" id="CHEBI:18420"/>
        <note>catalytic</note>
    </ligand>
</feature>
<feature type="binding site" description="in other chain" evidence="1">
    <location>
        <begin position="130"/>
        <end position="132"/>
    </location>
    <ligand>
        <name>substrate</name>
        <note>ligand shared between dimeric partners</note>
    </ligand>
</feature>
<feature type="binding site" description="in other chain" evidence="1">
    <location>
        <position position="159"/>
    </location>
    <ligand>
        <name>ADP</name>
        <dbReference type="ChEBI" id="CHEBI:456216"/>
        <note>allosteric activator; ligand shared between dimeric partners</note>
    </ligand>
</feature>
<feature type="binding site" evidence="1">
    <location>
        <position position="167"/>
    </location>
    <ligand>
        <name>substrate</name>
        <note>ligand shared between dimeric partners</note>
    </ligand>
</feature>
<feature type="binding site" description="in other chain" evidence="1">
    <location>
        <begin position="174"/>
        <end position="176"/>
    </location>
    <ligand>
        <name>substrate</name>
        <note>ligand shared between dimeric partners</note>
    </ligand>
</feature>
<feature type="binding site" description="in other chain" evidence="1">
    <location>
        <begin position="190"/>
        <end position="192"/>
    </location>
    <ligand>
        <name>ADP</name>
        <dbReference type="ChEBI" id="CHEBI:456216"/>
        <note>allosteric activator; ligand shared between dimeric partners</note>
    </ligand>
</feature>
<feature type="binding site" description="in other chain" evidence="1">
    <location>
        <position position="216"/>
    </location>
    <ligand>
        <name>ADP</name>
        <dbReference type="ChEBI" id="CHEBI:456216"/>
        <note>allosteric activator; ligand shared between dimeric partners</note>
    </ligand>
</feature>
<feature type="binding site" description="in other chain" evidence="1">
    <location>
        <begin position="218"/>
        <end position="220"/>
    </location>
    <ligand>
        <name>ADP</name>
        <dbReference type="ChEBI" id="CHEBI:456216"/>
        <note>allosteric activator; ligand shared between dimeric partners</note>
    </ligand>
</feature>
<feature type="binding site" description="in other chain" evidence="1">
    <location>
        <position position="227"/>
    </location>
    <ligand>
        <name>substrate</name>
        <note>ligand shared between dimeric partners</note>
    </ligand>
</feature>
<feature type="binding site" evidence="1">
    <location>
        <position position="248"/>
    </location>
    <ligand>
        <name>substrate</name>
        <note>ligand shared between dimeric partners</note>
    </ligand>
</feature>
<feature type="binding site" description="in other chain" evidence="1">
    <location>
        <begin position="254"/>
        <end position="257"/>
    </location>
    <ligand>
        <name>substrate</name>
        <note>ligand shared between dimeric partners</note>
    </ligand>
</feature>
<protein>
    <recommendedName>
        <fullName evidence="1">ATP-dependent 6-phosphofructokinase</fullName>
        <shortName evidence="1">ATP-PFK</shortName>
        <shortName evidence="1">Phosphofructokinase</shortName>
        <ecNumber evidence="1">2.7.1.11</ecNumber>
    </recommendedName>
    <alternativeName>
        <fullName evidence="1">Phosphohexokinase</fullName>
    </alternativeName>
</protein>
<evidence type="ECO:0000255" key="1">
    <source>
        <dbReference type="HAMAP-Rule" id="MF_00339"/>
    </source>
</evidence>
<reference key="1">
    <citation type="journal article" date="2008" name="J. Bacteriol.">
        <title>The complete genome sequence of Actinobacillus pleuropneumoniae L20 (serotype 5b).</title>
        <authorList>
            <person name="Foote S.J."/>
            <person name="Bosse J.T."/>
            <person name="Bouevitch A.B."/>
            <person name="Langford P.R."/>
            <person name="Young N.M."/>
            <person name="Nash J.H.E."/>
        </authorList>
    </citation>
    <scope>NUCLEOTIDE SEQUENCE [LARGE SCALE GENOMIC DNA]</scope>
    <source>
        <strain>L20</strain>
    </source>
</reference>
<dbReference type="EC" id="2.7.1.11" evidence="1"/>
<dbReference type="EMBL" id="CP000569">
    <property type="protein sequence ID" value="ABN74214.1"/>
    <property type="molecule type" value="Genomic_DNA"/>
</dbReference>
<dbReference type="RefSeq" id="WP_005598005.1">
    <property type="nucleotide sequence ID" value="NC_009053.1"/>
</dbReference>
<dbReference type="SMR" id="A3N1C8"/>
<dbReference type="STRING" id="416269.APL_1124"/>
<dbReference type="EnsemblBacteria" id="ABN74214">
    <property type="protein sequence ID" value="ABN74214"/>
    <property type="gene ID" value="APL_1124"/>
</dbReference>
<dbReference type="GeneID" id="48599356"/>
<dbReference type="KEGG" id="apl:APL_1124"/>
<dbReference type="eggNOG" id="COG0205">
    <property type="taxonomic scope" value="Bacteria"/>
</dbReference>
<dbReference type="HOGENOM" id="CLU_020655_0_1_6"/>
<dbReference type="UniPathway" id="UPA00109">
    <property type="reaction ID" value="UER00182"/>
</dbReference>
<dbReference type="Proteomes" id="UP000001432">
    <property type="component" value="Chromosome"/>
</dbReference>
<dbReference type="GO" id="GO:0005945">
    <property type="term" value="C:6-phosphofructokinase complex"/>
    <property type="evidence" value="ECO:0007669"/>
    <property type="project" value="TreeGrafter"/>
</dbReference>
<dbReference type="GO" id="GO:0003872">
    <property type="term" value="F:6-phosphofructokinase activity"/>
    <property type="evidence" value="ECO:0007669"/>
    <property type="project" value="UniProtKB-UniRule"/>
</dbReference>
<dbReference type="GO" id="GO:0016208">
    <property type="term" value="F:AMP binding"/>
    <property type="evidence" value="ECO:0007669"/>
    <property type="project" value="TreeGrafter"/>
</dbReference>
<dbReference type="GO" id="GO:0005524">
    <property type="term" value="F:ATP binding"/>
    <property type="evidence" value="ECO:0007669"/>
    <property type="project" value="UniProtKB-KW"/>
</dbReference>
<dbReference type="GO" id="GO:0070095">
    <property type="term" value="F:fructose-6-phosphate binding"/>
    <property type="evidence" value="ECO:0007669"/>
    <property type="project" value="TreeGrafter"/>
</dbReference>
<dbReference type="GO" id="GO:0042802">
    <property type="term" value="F:identical protein binding"/>
    <property type="evidence" value="ECO:0007669"/>
    <property type="project" value="TreeGrafter"/>
</dbReference>
<dbReference type="GO" id="GO:0046872">
    <property type="term" value="F:metal ion binding"/>
    <property type="evidence" value="ECO:0007669"/>
    <property type="project" value="UniProtKB-KW"/>
</dbReference>
<dbReference type="GO" id="GO:0048029">
    <property type="term" value="F:monosaccharide binding"/>
    <property type="evidence" value="ECO:0007669"/>
    <property type="project" value="TreeGrafter"/>
</dbReference>
<dbReference type="GO" id="GO:0061621">
    <property type="term" value="P:canonical glycolysis"/>
    <property type="evidence" value="ECO:0007669"/>
    <property type="project" value="TreeGrafter"/>
</dbReference>
<dbReference type="GO" id="GO:0030388">
    <property type="term" value="P:fructose 1,6-bisphosphate metabolic process"/>
    <property type="evidence" value="ECO:0007669"/>
    <property type="project" value="TreeGrafter"/>
</dbReference>
<dbReference type="GO" id="GO:0006002">
    <property type="term" value="P:fructose 6-phosphate metabolic process"/>
    <property type="evidence" value="ECO:0007669"/>
    <property type="project" value="InterPro"/>
</dbReference>
<dbReference type="CDD" id="cd00763">
    <property type="entry name" value="Bacterial_PFK"/>
    <property type="match status" value="1"/>
</dbReference>
<dbReference type="FunFam" id="3.40.50.450:FF:000001">
    <property type="entry name" value="ATP-dependent 6-phosphofructokinase"/>
    <property type="match status" value="1"/>
</dbReference>
<dbReference type="FunFam" id="3.40.50.460:FF:000002">
    <property type="entry name" value="ATP-dependent 6-phosphofructokinase"/>
    <property type="match status" value="1"/>
</dbReference>
<dbReference type="Gene3D" id="3.40.50.450">
    <property type="match status" value="1"/>
</dbReference>
<dbReference type="Gene3D" id="3.40.50.460">
    <property type="entry name" value="Phosphofructokinase domain"/>
    <property type="match status" value="1"/>
</dbReference>
<dbReference type="HAMAP" id="MF_00339">
    <property type="entry name" value="Phosphofructokinase_I_B1"/>
    <property type="match status" value="1"/>
</dbReference>
<dbReference type="InterPro" id="IPR022953">
    <property type="entry name" value="ATP_PFK"/>
</dbReference>
<dbReference type="InterPro" id="IPR012003">
    <property type="entry name" value="ATP_PFK_prok-type"/>
</dbReference>
<dbReference type="InterPro" id="IPR012828">
    <property type="entry name" value="PFKA_ATP_prok"/>
</dbReference>
<dbReference type="InterPro" id="IPR015912">
    <property type="entry name" value="Phosphofructokinase_CS"/>
</dbReference>
<dbReference type="InterPro" id="IPR000023">
    <property type="entry name" value="Phosphofructokinase_dom"/>
</dbReference>
<dbReference type="InterPro" id="IPR035966">
    <property type="entry name" value="PKF_sf"/>
</dbReference>
<dbReference type="NCBIfam" id="TIGR02482">
    <property type="entry name" value="PFKA_ATP"/>
    <property type="match status" value="1"/>
</dbReference>
<dbReference type="NCBIfam" id="NF002872">
    <property type="entry name" value="PRK03202.1"/>
    <property type="match status" value="1"/>
</dbReference>
<dbReference type="PANTHER" id="PTHR13697:SF4">
    <property type="entry name" value="ATP-DEPENDENT 6-PHOSPHOFRUCTOKINASE"/>
    <property type="match status" value="1"/>
</dbReference>
<dbReference type="PANTHER" id="PTHR13697">
    <property type="entry name" value="PHOSPHOFRUCTOKINASE"/>
    <property type="match status" value="1"/>
</dbReference>
<dbReference type="Pfam" id="PF00365">
    <property type="entry name" value="PFK"/>
    <property type="match status" value="1"/>
</dbReference>
<dbReference type="PIRSF" id="PIRSF000532">
    <property type="entry name" value="ATP_PFK_prok"/>
    <property type="match status" value="1"/>
</dbReference>
<dbReference type="PRINTS" id="PR00476">
    <property type="entry name" value="PHFRCTKINASE"/>
</dbReference>
<dbReference type="SUPFAM" id="SSF53784">
    <property type="entry name" value="Phosphofructokinase"/>
    <property type="match status" value="1"/>
</dbReference>
<dbReference type="PROSITE" id="PS00433">
    <property type="entry name" value="PHOSPHOFRUCTOKINASE"/>
    <property type="match status" value="1"/>
</dbReference>
<gene>
    <name evidence="1" type="primary">pfkA</name>
    <name type="ordered locus">APL_1124</name>
</gene>
<proteinExistence type="inferred from homology"/>
<keyword id="KW-0021">Allosteric enzyme</keyword>
<keyword id="KW-0067">ATP-binding</keyword>
<keyword id="KW-0963">Cytoplasm</keyword>
<keyword id="KW-0324">Glycolysis</keyword>
<keyword id="KW-0418">Kinase</keyword>
<keyword id="KW-0460">Magnesium</keyword>
<keyword id="KW-0479">Metal-binding</keyword>
<keyword id="KW-0547">Nucleotide-binding</keyword>
<keyword id="KW-1185">Reference proteome</keyword>
<keyword id="KW-0808">Transferase</keyword>
<sequence length="324" mass="35515">MAKQIKKIAVLTSGGDAPGMNAAIRGVVRAALNEGLEVYGVQDGYYGLYTDRVIPLDRRSVSETINRGGTFLGSARFPQFKDPDVRKKSVETLKKYDIDALVVIGGDGSYMGAKLITEEFGYPCIGIPGTIDNDIVGTDYTIGYQTALETAVEAIDRLRDTSTSHQRISIVEIMGRHCGDLTISAALASGCEYIIVPEKGLDKESLMRNIEDGFNKGKRHAIIAITELMTDVQALAKEIEDRFGHETRATVLGHIQRGGAPCPFDRILASRMGVYAVDLLLQGHGGRCIGIKNENLVHHDIIDAINNMRRPFKEELFEAARKLF</sequence>
<comment type="function">
    <text evidence="1">Catalyzes the phosphorylation of D-fructose 6-phosphate to fructose 1,6-bisphosphate by ATP, the first committing step of glycolysis.</text>
</comment>
<comment type="catalytic activity">
    <reaction evidence="1">
        <text>beta-D-fructose 6-phosphate + ATP = beta-D-fructose 1,6-bisphosphate + ADP + H(+)</text>
        <dbReference type="Rhea" id="RHEA:16109"/>
        <dbReference type="ChEBI" id="CHEBI:15378"/>
        <dbReference type="ChEBI" id="CHEBI:30616"/>
        <dbReference type="ChEBI" id="CHEBI:32966"/>
        <dbReference type="ChEBI" id="CHEBI:57634"/>
        <dbReference type="ChEBI" id="CHEBI:456216"/>
        <dbReference type="EC" id="2.7.1.11"/>
    </reaction>
</comment>
<comment type="cofactor">
    <cofactor evidence="1">
        <name>Mg(2+)</name>
        <dbReference type="ChEBI" id="CHEBI:18420"/>
    </cofactor>
</comment>
<comment type="activity regulation">
    <text evidence="1">Allosterically activated by ADP and other diphosphonucleosides, and allosterically inhibited by phosphoenolpyruvate.</text>
</comment>
<comment type="pathway">
    <text evidence="1">Carbohydrate degradation; glycolysis; D-glyceraldehyde 3-phosphate and glycerone phosphate from D-glucose: step 3/4.</text>
</comment>
<comment type="subunit">
    <text evidence="1">Homotetramer.</text>
</comment>
<comment type="subcellular location">
    <subcellularLocation>
        <location evidence="1">Cytoplasm</location>
    </subcellularLocation>
</comment>
<comment type="similarity">
    <text evidence="1">Belongs to the phosphofructokinase type A (PFKA) family. ATP-dependent PFK group I subfamily. Prokaryotic clade 'B1' sub-subfamily.</text>
</comment>
<name>PFKA_ACTP2</name>
<accession>A3N1C8</accession>
<organism>
    <name type="scientific">Actinobacillus pleuropneumoniae serotype 5b (strain L20)</name>
    <dbReference type="NCBI Taxonomy" id="416269"/>
    <lineage>
        <taxon>Bacteria</taxon>
        <taxon>Pseudomonadati</taxon>
        <taxon>Pseudomonadota</taxon>
        <taxon>Gammaproteobacteria</taxon>
        <taxon>Pasteurellales</taxon>
        <taxon>Pasteurellaceae</taxon>
        <taxon>Actinobacillus</taxon>
    </lineage>
</organism>